<comment type="function">
    <text evidence="1">Necessary for efficient RNA polymerase transcription elongation past template-encoded arresting sites. The arresting sites in DNA have the property of trapping a certain fraction of elongating RNA polymerases that pass through, resulting in locked ternary complexes. Cleavage of the nascent transcript by cleavage factors such as GreA or GreB allows the resumption of elongation from the new 3'terminus. GreA releases sequences of 2 to 3 nucleotides.</text>
</comment>
<comment type="similarity">
    <text evidence="1">Belongs to the GreA/GreB family.</text>
</comment>
<keyword id="KW-0175">Coiled coil</keyword>
<keyword id="KW-0238">DNA-binding</keyword>
<keyword id="KW-0804">Transcription</keyword>
<keyword id="KW-0805">Transcription regulation</keyword>
<organism>
    <name type="scientific">Chlorobium limicola (strain DSM 245 / NBRC 103803 / 6330)</name>
    <dbReference type="NCBI Taxonomy" id="290315"/>
    <lineage>
        <taxon>Bacteria</taxon>
        <taxon>Pseudomonadati</taxon>
        <taxon>Chlorobiota</taxon>
        <taxon>Chlorobiia</taxon>
        <taxon>Chlorobiales</taxon>
        <taxon>Chlorobiaceae</taxon>
        <taxon>Chlorobium/Pelodictyon group</taxon>
        <taxon>Chlorobium</taxon>
    </lineage>
</organism>
<sequence length="159" mass="18042">MSDRIYLTRDGYNRLKEELYVLIHQTRKEVLEKIAEARSHGDLSENAEYDAAREQQSQTEARIADLENKLSTATILDPKLIKTDKVYILTSVKLKNLQVEDEVIEYTLVSSEEADTDLGKISVRSPVGRSLIGKTVGDKVHITVPKGELHFEILDIFVK</sequence>
<evidence type="ECO:0000255" key="1">
    <source>
        <dbReference type="HAMAP-Rule" id="MF_00105"/>
    </source>
</evidence>
<name>GREA_CHLL2</name>
<feature type="chain" id="PRO_1000094154" description="Transcription elongation factor GreA">
    <location>
        <begin position="1"/>
        <end position="159"/>
    </location>
</feature>
<feature type="coiled-coil region" evidence="1">
    <location>
        <begin position="44"/>
        <end position="75"/>
    </location>
</feature>
<dbReference type="EMBL" id="CP001097">
    <property type="protein sequence ID" value="ACD90714.1"/>
    <property type="molecule type" value="Genomic_DNA"/>
</dbReference>
<dbReference type="RefSeq" id="WP_012466587.1">
    <property type="nucleotide sequence ID" value="NC_010803.1"/>
</dbReference>
<dbReference type="SMR" id="B3EE12"/>
<dbReference type="STRING" id="290315.Clim_1672"/>
<dbReference type="KEGG" id="cli:Clim_1672"/>
<dbReference type="eggNOG" id="COG0782">
    <property type="taxonomic scope" value="Bacteria"/>
</dbReference>
<dbReference type="HOGENOM" id="CLU_101379_2_0_10"/>
<dbReference type="OrthoDB" id="9808774at2"/>
<dbReference type="Proteomes" id="UP000008841">
    <property type="component" value="Chromosome"/>
</dbReference>
<dbReference type="GO" id="GO:0003677">
    <property type="term" value="F:DNA binding"/>
    <property type="evidence" value="ECO:0007669"/>
    <property type="project" value="UniProtKB-UniRule"/>
</dbReference>
<dbReference type="GO" id="GO:0070063">
    <property type="term" value="F:RNA polymerase binding"/>
    <property type="evidence" value="ECO:0007669"/>
    <property type="project" value="InterPro"/>
</dbReference>
<dbReference type="GO" id="GO:0006354">
    <property type="term" value="P:DNA-templated transcription elongation"/>
    <property type="evidence" value="ECO:0007669"/>
    <property type="project" value="TreeGrafter"/>
</dbReference>
<dbReference type="GO" id="GO:0032784">
    <property type="term" value="P:regulation of DNA-templated transcription elongation"/>
    <property type="evidence" value="ECO:0007669"/>
    <property type="project" value="UniProtKB-UniRule"/>
</dbReference>
<dbReference type="FunFam" id="1.10.287.180:FF:000001">
    <property type="entry name" value="Transcription elongation factor GreA"/>
    <property type="match status" value="1"/>
</dbReference>
<dbReference type="FunFam" id="3.10.50.30:FF:000001">
    <property type="entry name" value="Transcription elongation factor GreA"/>
    <property type="match status" value="1"/>
</dbReference>
<dbReference type="Gene3D" id="3.10.50.30">
    <property type="entry name" value="Transcription elongation factor, GreA/GreB, C-terminal domain"/>
    <property type="match status" value="1"/>
</dbReference>
<dbReference type="Gene3D" id="1.10.287.180">
    <property type="entry name" value="Transcription elongation factor, GreA/GreB, N-terminal domain"/>
    <property type="match status" value="1"/>
</dbReference>
<dbReference type="HAMAP" id="MF_00105">
    <property type="entry name" value="GreA_GreB"/>
    <property type="match status" value="1"/>
</dbReference>
<dbReference type="InterPro" id="IPR036953">
    <property type="entry name" value="GreA/GreB_C_sf"/>
</dbReference>
<dbReference type="InterPro" id="IPR018151">
    <property type="entry name" value="TF_GreA/GreB_CS"/>
</dbReference>
<dbReference type="InterPro" id="IPR006359">
    <property type="entry name" value="Tscrpt_elong_fac_GreA"/>
</dbReference>
<dbReference type="InterPro" id="IPR028624">
    <property type="entry name" value="Tscrpt_elong_fac_GreA/B"/>
</dbReference>
<dbReference type="InterPro" id="IPR001437">
    <property type="entry name" value="Tscrpt_elong_fac_GreA/B_C"/>
</dbReference>
<dbReference type="InterPro" id="IPR023459">
    <property type="entry name" value="Tscrpt_elong_fac_GreA/B_fam"/>
</dbReference>
<dbReference type="InterPro" id="IPR022691">
    <property type="entry name" value="Tscrpt_elong_fac_GreA/B_N"/>
</dbReference>
<dbReference type="InterPro" id="IPR036805">
    <property type="entry name" value="Tscrpt_elong_fac_GreA/B_N_sf"/>
</dbReference>
<dbReference type="NCBIfam" id="TIGR01462">
    <property type="entry name" value="greA"/>
    <property type="match status" value="1"/>
</dbReference>
<dbReference type="NCBIfam" id="NF001261">
    <property type="entry name" value="PRK00226.1-2"/>
    <property type="match status" value="1"/>
</dbReference>
<dbReference type="NCBIfam" id="NF001263">
    <property type="entry name" value="PRK00226.1-4"/>
    <property type="match status" value="1"/>
</dbReference>
<dbReference type="PANTHER" id="PTHR30437">
    <property type="entry name" value="TRANSCRIPTION ELONGATION FACTOR GREA"/>
    <property type="match status" value="1"/>
</dbReference>
<dbReference type="PANTHER" id="PTHR30437:SF4">
    <property type="entry name" value="TRANSCRIPTION ELONGATION FACTOR GREA"/>
    <property type="match status" value="1"/>
</dbReference>
<dbReference type="Pfam" id="PF01272">
    <property type="entry name" value="GreA_GreB"/>
    <property type="match status" value="1"/>
</dbReference>
<dbReference type="Pfam" id="PF03449">
    <property type="entry name" value="GreA_GreB_N"/>
    <property type="match status" value="1"/>
</dbReference>
<dbReference type="PIRSF" id="PIRSF006092">
    <property type="entry name" value="GreA_GreB"/>
    <property type="match status" value="1"/>
</dbReference>
<dbReference type="SUPFAM" id="SSF54534">
    <property type="entry name" value="FKBP-like"/>
    <property type="match status" value="1"/>
</dbReference>
<dbReference type="SUPFAM" id="SSF46557">
    <property type="entry name" value="GreA transcript cleavage protein, N-terminal domain"/>
    <property type="match status" value="1"/>
</dbReference>
<dbReference type="PROSITE" id="PS00829">
    <property type="entry name" value="GREAB_1"/>
    <property type="match status" value="1"/>
</dbReference>
<dbReference type="PROSITE" id="PS00830">
    <property type="entry name" value="GREAB_2"/>
    <property type="match status" value="1"/>
</dbReference>
<gene>
    <name evidence="1" type="primary">greA</name>
    <name type="ordered locus">Clim_1672</name>
</gene>
<proteinExistence type="inferred from homology"/>
<accession>B3EE12</accession>
<reference key="1">
    <citation type="submission" date="2008-05" db="EMBL/GenBank/DDBJ databases">
        <title>Complete sequence of Chlorobium limicola DSM 245.</title>
        <authorList>
            <consortium name="US DOE Joint Genome Institute"/>
            <person name="Lucas S."/>
            <person name="Copeland A."/>
            <person name="Lapidus A."/>
            <person name="Glavina del Rio T."/>
            <person name="Dalin E."/>
            <person name="Tice H."/>
            <person name="Bruce D."/>
            <person name="Goodwin L."/>
            <person name="Pitluck S."/>
            <person name="Schmutz J."/>
            <person name="Larimer F."/>
            <person name="Land M."/>
            <person name="Hauser L."/>
            <person name="Kyrpides N."/>
            <person name="Ovchinnikova G."/>
            <person name="Zhao F."/>
            <person name="Li T."/>
            <person name="Liu Z."/>
            <person name="Overmann J."/>
            <person name="Bryant D.A."/>
            <person name="Richardson P."/>
        </authorList>
    </citation>
    <scope>NUCLEOTIDE SEQUENCE [LARGE SCALE GENOMIC DNA]</scope>
    <source>
        <strain>DSM 245 / NBRC 103803 / 6330</strain>
    </source>
</reference>
<protein>
    <recommendedName>
        <fullName evidence="1">Transcription elongation factor GreA</fullName>
    </recommendedName>
    <alternativeName>
        <fullName evidence="1">Transcript cleavage factor GreA</fullName>
    </alternativeName>
</protein>